<evidence type="ECO:0000255" key="1">
    <source>
        <dbReference type="HAMAP-Rule" id="MF_00515"/>
    </source>
</evidence>
<keyword id="KW-0274">FAD</keyword>
<keyword id="KW-0285">Flavoprotein</keyword>
<keyword id="KW-0560">Oxidoreductase</keyword>
<keyword id="KW-1185">Reference proteome</keyword>
<proteinExistence type="inferred from homology"/>
<name>MTOX_ECO45</name>
<feature type="chain" id="PRO_1000127434" description="N-methyl-L-tryptophan oxidase">
    <location>
        <begin position="1"/>
        <end position="372"/>
    </location>
</feature>
<feature type="binding site" evidence="1">
    <location>
        <begin position="4"/>
        <end position="34"/>
    </location>
    <ligand>
        <name>FAD</name>
        <dbReference type="ChEBI" id="CHEBI:57692"/>
    </ligand>
</feature>
<feature type="modified residue" description="S-8alpha-FAD cysteine" evidence="1">
    <location>
        <position position="308"/>
    </location>
</feature>
<organism>
    <name type="scientific">Escherichia coli O45:K1 (strain S88 / ExPEC)</name>
    <dbReference type="NCBI Taxonomy" id="585035"/>
    <lineage>
        <taxon>Bacteria</taxon>
        <taxon>Pseudomonadati</taxon>
        <taxon>Pseudomonadota</taxon>
        <taxon>Gammaproteobacteria</taxon>
        <taxon>Enterobacterales</taxon>
        <taxon>Enterobacteriaceae</taxon>
        <taxon>Escherichia</taxon>
    </lineage>
</organism>
<comment type="function">
    <text evidence="1">Catalyzes the oxidative demethylation of N-methyl-L-tryptophan.</text>
</comment>
<comment type="catalytic activity">
    <reaction evidence="1">
        <text>N(alpha)-methyl-L-tryptophan + O2 + H2O = L-tryptophan + formaldehyde + H2O2</text>
        <dbReference type="Rhea" id="RHEA:28006"/>
        <dbReference type="ChEBI" id="CHEBI:15377"/>
        <dbReference type="ChEBI" id="CHEBI:15379"/>
        <dbReference type="ChEBI" id="CHEBI:16240"/>
        <dbReference type="ChEBI" id="CHEBI:16842"/>
        <dbReference type="ChEBI" id="CHEBI:57283"/>
        <dbReference type="ChEBI" id="CHEBI:57912"/>
    </reaction>
</comment>
<comment type="cofactor">
    <cofactor evidence="1">
        <name>FAD</name>
        <dbReference type="ChEBI" id="CHEBI:57692"/>
    </cofactor>
    <text evidence="1">Binds 1 FAD per subunit.</text>
</comment>
<comment type="subunit">
    <text evidence="1">Monomer.</text>
</comment>
<comment type="similarity">
    <text evidence="1">Belongs to the MSOX/MTOX family. MTOX subfamily.</text>
</comment>
<accession>B7MIK0</accession>
<gene>
    <name evidence="1" type="primary">solA</name>
    <name type="ordered locus">ECS88_1073</name>
</gene>
<reference key="1">
    <citation type="journal article" date="2009" name="PLoS Genet.">
        <title>Organised genome dynamics in the Escherichia coli species results in highly diverse adaptive paths.</title>
        <authorList>
            <person name="Touchon M."/>
            <person name="Hoede C."/>
            <person name="Tenaillon O."/>
            <person name="Barbe V."/>
            <person name="Baeriswyl S."/>
            <person name="Bidet P."/>
            <person name="Bingen E."/>
            <person name="Bonacorsi S."/>
            <person name="Bouchier C."/>
            <person name="Bouvet O."/>
            <person name="Calteau A."/>
            <person name="Chiapello H."/>
            <person name="Clermont O."/>
            <person name="Cruveiller S."/>
            <person name="Danchin A."/>
            <person name="Diard M."/>
            <person name="Dossat C."/>
            <person name="Karoui M.E."/>
            <person name="Frapy E."/>
            <person name="Garry L."/>
            <person name="Ghigo J.M."/>
            <person name="Gilles A.M."/>
            <person name="Johnson J."/>
            <person name="Le Bouguenec C."/>
            <person name="Lescat M."/>
            <person name="Mangenot S."/>
            <person name="Martinez-Jehanne V."/>
            <person name="Matic I."/>
            <person name="Nassif X."/>
            <person name="Oztas S."/>
            <person name="Petit M.A."/>
            <person name="Pichon C."/>
            <person name="Rouy Z."/>
            <person name="Ruf C.S."/>
            <person name="Schneider D."/>
            <person name="Tourret J."/>
            <person name="Vacherie B."/>
            <person name="Vallenet D."/>
            <person name="Medigue C."/>
            <person name="Rocha E.P.C."/>
            <person name="Denamur E."/>
        </authorList>
    </citation>
    <scope>NUCLEOTIDE SEQUENCE [LARGE SCALE GENOMIC DNA]</scope>
    <source>
        <strain>S88 / ExPEC</strain>
    </source>
</reference>
<dbReference type="EC" id="1.5.3.-" evidence="1"/>
<dbReference type="EMBL" id="CU928161">
    <property type="protein sequence ID" value="CAR02400.1"/>
    <property type="molecule type" value="Genomic_DNA"/>
</dbReference>
<dbReference type="RefSeq" id="WP_000872794.1">
    <property type="nucleotide sequence ID" value="NC_011742.1"/>
</dbReference>
<dbReference type="SMR" id="B7MIK0"/>
<dbReference type="KEGG" id="ecz:ECS88_1073"/>
<dbReference type="HOGENOM" id="CLU_007884_2_1_6"/>
<dbReference type="Proteomes" id="UP000000747">
    <property type="component" value="Chromosome"/>
</dbReference>
<dbReference type="GO" id="GO:0005829">
    <property type="term" value="C:cytosol"/>
    <property type="evidence" value="ECO:0007669"/>
    <property type="project" value="TreeGrafter"/>
</dbReference>
<dbReference type="GO" id="GO:0050660">
    <property type="term" value="F:flavin adenine dinucleotide binding"/>
    <property type="evidence" value="ECO:0007669"/>
    <property type="project" value="InterPro"/>
</dbReference>
<dbReference type="GO" id="GO:0050131">
    <property type="term" value="F:N-methyl-L-amino-acid oxidase activity"/>
    <property type="evidence" value="ECO:0007669"/>
    <property type="project" value="InterPro"/>
</dbReference>
<dbReference type="GO" id="GO:0008115">
    <property type="term" value="F:sarcosine oxidase activity"/>
    <property type="evidence" value="ECO:0007669"/>
    <property type="project" value="TreeGrafter"/>
</dbReference>
<dbReference type="Gene3D" id="3.30.9.10">
    <property type="entry name" value="D-Amino Acid Oxidase, subunit A, domain 2"/>
    <property type="match status" value="1"/>
</dbReference>
<dbReference type="Gene3D" id="3.50.50.60">
    <property type="entry name" value="FAD/NAD(P)-binding domain"/>
    <property type="match status" value="1"/>
</dbReference>
<dbReference type="HAMAP" id="MF_00515">
    <property type="entry name" value="MTOX"/>
    <property type="match status" value="1"/>
</dbReference>
<dbReference type="InterPro" id="IPR006076">
    <property type="entry name" value="FAD-dep_OxRdtase"/>
</dbReference>
<dbReference type="InterPro" id="IPR036188">
    <property type="entry name" value="FAD/NAD-bd_sf"/>
</dbReference>
<dbReference type="InterPro" id="IPR023493">
    <property type="entry name" value="Me_Trp_Oxase_MTOX"/>
</dbReference>
<dbReference type="InterPro" id="IPR045170">
    <property type="entry name" value="MTOX"/>
</dbReference>
<dbReference type="NCBIfam" id="NF008425">
    <property type="entry name" value="PRK11259.1"/>
    <property type="match status" value="1"/>
</dbReference>
<dbReference type="PANTHER" id="PTHR10961:SF7">
    <property type="entry name" value="FAD DEPENDENT OXIDOREDUCTASE DOMAIN-CONTAINING PROTEIN"/>
    <property type="match status" value="1"/>
</dbReference>
<dbReference type="PANTHER" id="PTHR10961">
    <property type="entry name" value="PEROXISOMAL SARCOSINE OXIDASE"/>
    <property type="match status" value="1"/>
</dbReference>
<dbReference type="Pfam" id="PF01266">
    <property type="entry name" value="DAO"/>
    <property type="match status" value="1"/>
</dbReference>
<dbReference type="SUPFAM" id="SSF54373">
    <property type="entry name" value="FAD-linked reductases, C-terminal domain"/>
    <property type="match status" value="1"/>
</dbReference>
<dbReference type="SUPFAM" id="SSF51905">
    <property type="entry name" value="FAD/NAD(P)-binding domain"/>
    <property type="match status" value="1"/>
</dbReference>
<protein>
    <recommendedName>
        <fullName evidence="1">N-methyl-L-tryptophan oxidase</fullName>
        <shortName evidence="1">MTOX</shortName>
        <ecNumber evidence="1">1.5.3.-</ecNumber>
    </recommendedName>
</protein>
<sequence length="372" mass="40916">MKYDLIIIGSGSVGAAAGYYATRAGLNVLMTDAHMPPHQHGSHHGDTRLIRHAYGEGEKYVPLVLRAQMLWDELSRHNEDDPIFVRSGVINLGPADSAFLANVAHSAEQWQLNVEKLDAQGIMARWPEIRVPDNYIGLFETDSGFLRSELAIKTWIQLAKEAGCAQLFNCPVTAIRHDDDGVTIETADGEYQAKKAIVCAGTWVKDLLPELPVQPVRKVFAWYQADGRYSVKNKFPAFTGELPNGDQYYGFPAENDALKIGKHNGGQVIHSADERVPFAEVVSDGSEAFPFLRNVLPGIGCCLYGAACTYDNSPDEDFIIDTLPGHDNTLLITGLSGHGFKFASVLGEIAADFAQDKKSDFDLTPFRLSRFQ</sequence>